<comment type="function">
    <text evidence="1">Catalyzes a cyclopropane ring-opening reaction, the irreversible conversion of 1-aminocyclopropane-1-carboxylate (ACC) to ammonia and alpha-ketobutyrate. Allows growth on ACC as a nitrogen source.</text>
</comment>
<comment type="catalytic activity">
    <reaction evidence="1">
        <text>1-aminocyclopropane-1-carboxylate + H2O = 2-oxobutanoate + NH4(+)</text>
        <dbReference type="Rhea" id="RHEA:16933"/>
        <dbReference type="ChEBI" id="CHEBI:15377"/>
        <dbReference type="ChEBI" id="CHEBI:16763"/>
        <dbReference type="ChEBI" id="CHEBI:28938"/>
        <dbReference type="ChEBI" id="CHEBI:58360"/>
        <dbReference type="EC" id="3.5.99.7"/>
    </reaction>
</comment>
<comment type="cofactor">
    <cofactor evidence="1">
        <name>pyridoxal 5'-phosphate</name>
        <dbReference type="ChEBI" id="CHEBI:597326"/>
    </cofactor>
</comment>
<comment type="subunit">
    <text evidence="1">Homotrimer.</text>
</comment>
<comment type="similarity">
    <text evidence="1">Belongs to the ACC deaminase/D-cysteine desulfhydrase family.</text>
</comment>
<protein>
    <recommendedName>
        <fullName evidence="1">1-aminocyclopropane-1-carboxylate deaminase</fullName>
        <shortName evidence="1">ACC deaminase</shortName>
        <shortName evidence="1">ACCD</shortName>
        <ecNumber evidence="1">3.5.99.7</ecNumber>
    </recommendedName>
</protein>
<organism>
    <name type="scientific">Pseudomonas syringae pv. syringae (strain B728a)</name>
    <dbReference type="NCBI Taxonomy" id="205918"/>
    <lineage>
        <taxon>Bacteria</taxon>
        <taxon>Pseudomonadati</taxon>
        <taxon>Pseudomonadota</taxon>
        <taxon>Gammaproteobacteria</taxon>
        <taxon>Pseudomonadales</taxon>
        <taxon>Pseudomonadaceae</taxon>
        <taxon>Pseudomonas</taxon>
        <taxon>Pseudomonas syringae</taxon>
    </lineage>
</organism>
<name>1A1D_PSEU2</name>
<accession>Q4ZVH4</accession>
<proteinExistence type="inferred from homology"/>
<sequence length="338" mass="36851">MNLSKFKRYPLTFGPSPITPLKRLSEHLGGKVELYAKREDCNSGLAFGGNKTRKLEYLVPEAIDGGYDTLVSIGGIQSNQTRQVAAVAAHLGMKCVLVQENWVNYSDALYDRVGNIEMSRIMGADVRLDSAGFDIGIRPSWEKAMADVEESGGKPFPIPAGCSEHPYGGLGFVRFADEVRQQEEELGFKFDYIVVCSVTGSTHAGMLVGFAADGRAQRVIGIDASAKPEKTRAQVLRIAQNTAKLVELGREITAEDVVLDTRYAYPEYGLPNDGTLEAIRLCARLEGVLTDPVYEGKSMHGMIDMVRNGEFPEGSKVLYAHLGGVPALNAYSFLFKDG</sequence>
<keyword id="KW-0378">Hydrolase</keyword>
<keyword id="KW-0663">Pyridoxal phosphate</keyword>
<feature type="chain" id="PRO_0000304380" description="1-aminocyclopropane-1-carboxylate deaminase">
    <location>
        <begin position="1"/>
        <end position="338"/>
    </location>
</feature>
<feature type="active site" description="Nucleophile" evidence="1">
    <location>
        <position position="78"/>
    </location>
</feature>
<feature type="modified residue" description="N6-(pyridoxal phosphate)lysine" evidence="1">
    <location>
        <position position="51"/>
    </location>
</feature>
<gene>
    <name evidence="1" type="primary">acdS</name>
    <name type="ordered locus">Psyr_1801</name>
</gene>
<reference key="1">
    <citation type="journal article" date="2005" name="Proc. Natl. Acad. Sci. U.S.A.">
        <title>Comparison of the complete genome sequences of Pseudomonas syringae pv. syringae B728a and pv. tomato DC3000.</title>
        <authorList>
            <person name="Feil H."/>
            <person name="Feil W.S."/>
            <person name="Chain P."/>
            <person name="Larimer F."/>
            <person name="Dibartolo G."/>
            <person name="Copeland A."/>
            <person name="Lykidis A."/>
            <person name="Trong S."/>
            <person name="Nolan M."/>
            <person name="Goltsman E."/>
            <person name="Thiel J."/>
            <person name="Malfatti S."/>
            <person name="Loper J.E."/>
            <person name="Lapidus A."/>
            <person name="Detter J.C."/>
            <person name="Land M."/>
            <person name="Richardson P.M."/>
            <person name="Kyrpides N.C."/>
            <person name="Ivanova N."/>
            <person name="Lindow S.E."/>
        </authorList>
    </citation>
    <scope>NUCLEOTIDE SEQUENCE [LARGE SCALE GENOMIC DNA]</scope>
    <source>
        <strain>B728a</strain>
    </source>
</reference>
<evidence type="ECO:0000255" key="1">
    <source>
        <dbReference type="HAMAP-Rule" id="MF_00807"/>
    </source>
</evidence>
<dbReference type="EC" id="3.5.99.7" evidence="1"/>
<dbReference type="EMBL" id="CP000075">
    <property type="protein sequence ID" value="AAY36848.1"/>
    <property type="molecule type" value="Genomic_DNA"/>
</dbReference>
<dbReference type="RefSeq" id="WP_002552793.1">
    <property type="nucleotide sequence ID" value="NC_007005.1"/>
</dbReference>
<dbReference type="RefSeq" id="YP_234886.1">
    <property type="nucleotide sequence ID" value="NC_007005.1"/>
</dbReference>
<dbReference type="SMR" id="Q4ZVH4"/>
<dbReference type="STRING" id="205918.Psyr_1801"/>
<dbReference type="KEGG" id="psb:Psyr_1801"/>
<dbReference type="PATRIC" id="fig|205918.7.peg.1844"/>
<dbReference type="eggNOG" id="COG2515">
    <property type="taxonomic scope" value="Bacteria"/>
</dbReference>
<dbReference type="HOGENOM" id="CLU_048897_2_1_6"/>
<dbReference type="OrthoDB" id="9801249at2"/>
<dbReference type="Proteomes" id="UP000000426">
    <property type="component" value="Chromosome"/>
</dbReference>
<dbReference type="GO" id="GO:0008660">
    <property type="term" value="F:1-aminocyclopropane-1-carboxylate deaminase activity"/>
    <property type="evidence" value="ECO:0007669"/>
    <property type="project" value="UniProtKB-UniRule"/>
</dbReference>
<dbReference type="GO" id="GO:0019148">
    <property type="term" value="F:D-cysteine desulfhydrase activity"/>
    <property type="evidence" value="ECO:0007669"/>
    <property type="project" value="TreeGrafter"/>
</dbReference>
<dbReference type="GO" id="GO:0030170">
    <property type="term" value="F:pyridoxal phosphate binding"/>
    <property type="evidence" value="ECO:0007669"/>
    <property type="project" value="InterPro"/>
</dbReference>
<dbReference type="GO" id="GO:0018871">
    <property type="term" value="P:1-aminocyclopropane-1-carboxylate metabolic process"/>
    <property type="evidence" value="ECO:0007669"/>
    <property type="project" value="UniProtKB-UniRule"/>
</dbReference>
<dbReference type="GO" id="GO:0009310">
    <property type="term" value="P:amine catabolic process"/>
    <property type="evidence" value="ECO:0007669"/>
    <property type="project" value="InterPro"/>
</dbReference>
<dbReference type="CDD" id="cd06449">
    <property type="entry name" value="ACCD"/>
    <property type="match status" value="1"/>
</dbReference>
<dbReference type="FunFam" id="3.40.50.1100:FF:000048">
    <property type="entry name" value="1-aminocyclopropane-1-carboxylate deaminase"/>
    <property type="match status" value="1"/>
</dbReference>
<dbReference type="FunFam" id="3.40.50.1100:FF:000053">
    <property type="entry name" value="1-aminocyclopropane-1-carboxylate deaminase"/>
    <property type="match status" value="1"/>
</dbReference>
<dbReference type="Gene3D" id="3.40.50.1100">
    <property type="match status" value="2"/>
</dbReference>
<dbReference type="HAMAP" id="MF_00807">
    <property type="entry name" value="ACC_deaminase"/>
    <property type="match status" value="1"/>
</dbReference>
<dbReference type="InterPro" id="IPR027278">
    <property type="entry name" value="ACCD_DCysDesulf"/>
</dbReference>
<dbReference type="InterPro" id="IPR005965">
    <property type="entry name" value="ACP_carboxylate_deaminase"/>
</dbReference>
<dbReference type="InterPro" id="IPR020601">
    <property type="entry name" value="ACP_carboxylate_deaminase_bac"/>
</dbReference>
<dbReference type="InterPro" id="IPR001926">
    <property type="entry name" value="TrpB-like_PALP"/>
</dbReference>
<dbReference type="InterPro" id="IPR036052">
    <property type="entry name" value="TrpB-like_PALP_sf"/>
</dbReference>
<dbReference type="NCBIfam" id="TIGR01274">
    <property type="entry name" value="ACC_deam"/>
    <property type="match status" value="1"/>
</dbReference>
<dbReference type="PANTHER" id="PTHR43780">
    <property type="entry name" value="1-AMINOCYCLOPROPANE-1-CARBOXYLATE DEAMINASE-RELATED"/>
    <property type="match status" value="1"/>
</dbReference>
<dbReference type="PANTHER" id="PTHR43780:SF2">
    <property type="entry name" value="1-AMINOCYCLOPROPANE-1-CARBOXYLATE DEAMINASE-RELATED"/>
    <property type="match status" value="1"/>
</dbReference>
<dbReference type="Pfam" id="PF00291">
    <property type="entry name" value="PALP"/>
    <property type="match status" value="1"/>
</dbReference>
<dbReference type="PIRSF" id="PIRSF006278">
    <property type="entry name" value="ACCD_DCysDesulf"/>
    <property type="match status" value="1"/>
</dbReference>
<dbReference type="SUPFAM" id="SSF53686">
    <property type="entry name" value="Tryptophan synthase beta subunit-like PLP-dependent enzymes"/>
    <property type="match status" value="1"/>
</dbReference>